<keyword id="KW-0067">ATP-binding</keyword>
<keyword id="KW-0436">Ligase</keyword>
<keyword id="KW-0547">Nucleotide-binding</keyword>
<keyword id="KW-0658">Purine biosynthesis</keyword>
<reference key="1">
    <citation type="journal article" date="2007" name="Proc. Natl. Acad. Sci. U.S.A.">
        <title>Genomic and metabolic adaptations of Methanobrevibacter smithii to the human gut.</title>
        <authorList>
            <person name="Samuel B.S."/>
            <person name="Hansen E.E."/>
            <person name="Manchester J.K."/>
            <person name="Coutinho P.M."/>
            <person name="Henrissat B."/>
            <person name="Fulton R."/>
            <person name="Latreille P."/>
            <person name="Kim K."/>
            <person name="Wilson R.K."/>
            <person name="Gordon J.I."/>
        </authorList>
    </citation>
    <scope>NUCLEOTIDE SEQUENCE [LARGE SCALE GENOMIC DNA]</scope>
    <source>
        <strain>ATCC 35061 / DSM 861 / OCM 144 / PS</strain>
    </source>
</reference>
<dbReference type="EC" id="6.3.2.6" evidence="1"/>
<dbReference type="EMBL" id="CP000678">
    <property type="protein sequence ID" value="ABQ87752.1"/>
    <property type="molecule type" value="Genomic_DNA"/>
</dbReference>
<dbReference type="RefSeq" id="WP_004035282.1">
    <property type="nucleotide sequence ID" value="NZ_CP117965.1"/>
</dbReference>
<dbReference type="SMR" id="A5UNH4"/>
<dbReference type="STRING" id="420247.Msm_1547"/>
<dbReference type="EnsemblBacteria" id="ABQ87752">
    <property type="protein sequence ID" value="ABQ87752"/>
    <property type="gene ID" value="Msm_1547"/>
</dbReference>
<dbReference type="GeneID" id="78818187"/>
<dbReference type="KEGG" id="msi:Msm_1547"/>
<dbReference type="PATRIC" id="fig|420247.28.peg.1538"/>
<dbReference type="eggNOG" id="arCOG04421">
    <property type="taxonomic scope" value="Archaea"/>
</dbReference>
<dbReference type="HOGENOM" id="CLU_061495_2_0_2"/>
<dbReference type="UniPathway" id="UPA00074">
    <property type="reaction ID" value="UER00131"/>
</dbReference>
<dbReference type="Proteomes" id="UP000001992">
    <property type="component" value="Chromosome"/>
</dbReference>
<dbReference type="GO" id="GO:0005524">
    <property type="term" value="F:ATP binding"/>
    <property type="evidence" value="ECO:0007669"/>
    <property type="project" value="UniProtKB-KW"/>
</dbReference>
<dbReference type="GO" id="GO:0004639">
    <property type="term" value="F:phosphoribosylaminoimidazolesuccinocarboxamide synthase activity"/>
    <property type="evidence" value="ECO:0007669"/>
    <property type="project" value="UniProtKB-UniRule"/>
</dbReference>
<dbReference type="GO" id="GO:0006189">
    <property type="term" value="P:'de novo' IMP biosynthetic process"/>
    <property type="evidence" value="ECO:0007669"/>
    <property type="project" value="UniProtKB-UniRule"/>
</dbReference>
<dbReference type="GO" id="GO:0009236">
    <property type="term" value="P:cobalamin biosynthetic process"/>
    <property type="evidence" value="ECO:0007669"/>
    <property type="project" value="InterPro"/>
</dbReference>
<dbReference type="CDD" id="cd01415">
    <property type="entry name" value="SAICAR_synt_PurC"/>
    <property type="match status" value="1"/>
</dbReference>
<dbReference type="FunFam" id="3.30.470.20:FF:000006">
    <property type="entry name" value="Phosphoribosylaminoimidazole-succinocarboxamide synthase"/>
    <property type="match status" value="1"/>
</dbReference>
<dbReference type="Gene3D" id="3.30.470.20">
    <property type="entry name" value="ATP-grasp fold, B domain"/>
    <property type="match status" value="1"/>
</dbReference>
<dbReference type="Gene3D" id="3.30.200.20">
    <property type="entry name" value="Phosphorylase Kinase, domain 1"/>
    <property type="match status" value="1"/>
</dbReference>
<dbReference type="HAMAP" id="MF_00137">
    <property type="entry name" value="SAICAR_synth"/>
    <property type="match status" value="1"/>
</dbReference>
<dbReference type="InterPro" id="IPR028923">
    <property type="entry name" value="SAICAR_synt/ADE2_N"/>
</dbReference>
<dbReference type="InterPro" id="IPR033934">
    <property type="entry name" value="SAICAR_synt_PurC"/>
</dbReference>
<dbReference type="InterPro" id="IPR001636">
    <property type="entry name" value="SAICAR_synth"/>
</dbReference>
<dbReference type="InterPro" id="IPR050089">
    <property type="entry name" value="SAICAR_synthetase"/>
</dbReference>
<dbReference type="InterPro" id="IPR018236">
    <property type="entry name" value="SAICAR_synthetase_CS"/>
</dbReference>
<dbReference type="NCBIfam" id="TIGR00081">
    <property type="entry name" value="purC"/>
    <property type="match status" value="1"/>
</dbReference>
<dbReference type="PANTHER" id="PTHR43599">
    <property type="entry name" value="MULTIFUNCTIONAL PROTEIN ADE2"/>
    <property type="match status" value="1"/>
</dbReference>
<dbReference type="PANTHER" id="PTHR43599:SF3">
    <property type="entry name" value="SI:DKEY-6E2.2"/>
    <property type="match status" value="1"/>
</dbReference>
<dbReference type="Pfam" id="PF01259">
    <property type="entry name" value="SAICAR_synt"/>
    <property type="match status" value="1"/>
</dbReference>
<dbReference type="SUPFAM" id="SSF56104">
    <property type="entry name" value="SAICAR synthase-like"/>
    <property type="match status" value="1"/>
</dbReference>
<dbReference type="PROSITE" id="PS01057">
    <property type="entry name" value="SAICAR_SYNTHETASE_1"/>
    <property type="match status" value="1"/>
</dbReference>
<sequence>MDKKELINNGKVKSVYTTDDENAVIIEFRDDMTAGDGARKEVMNKKGSYNALISTKLFKVLEENGIKTQFIDLPETNVMVAKKLEMIPIEVIVRNIATGSLIRKYPIADGTKLDPPIVQMDFKADEFHDPMLNDSIIKALGLATQEEIDELTEKALKINEVLSEFLLEAGIILVDFKVEFGKDKNGEIILGDEISPDGCRLWDSETLDMLDKELFRKGKDNEVMDAYVEVYNRIIPDDEKIEL</sequence>
<proteinExistence type="inferred from homology"/>
<name>PUR7_METS3</name>
<gene>
    <name evidence="1" type="primary">purC</name>
    <name type="ordered locus">Msm_1547</name>
</gene>
<evidence type="ECO:0000255" key="1">
    <source>
        <dbReference type="HAMAP-Rule" id="MF_00137"/>
    </source>
</evidence>
<organism>
    <name type="scientific">Methanobrevibacter smithii (strain ATCC 35061 / DSM 861 / OCM 144 / PS)</name>
    <dbReference type="NCBI Taxonomy" id="420247"/>
    <lineage>
        <taxon>Archaea</taxon>
        <taxon>Methanobacteriati</taxon>
        <taxon>Methanobacteriota</taxon>
        <taxon>Methanomada group</taxon>
        <taxon>Methanobacteria</taxon>
        <taxon>Methanobacteriales</taxon>
        <taxon>Methanobacteriaceae</taxon>
        <taxon>Methanobrevibacter</taxon>
    </lineage>
</organism>
<accession>A5UNH4</accession>
<comment type="catalytic activity">
    <reaction evidence="1">
        <text>5-amino-1-(5-phospho-D-ribosyl)imidazole-4-carboxylate + L-aspartate + ATP = (2S)-2-[5-amino-1-(5-phospho-beta-D-ribosyl)imidazole-4-carboxamido]succinate + ADP + phosphate + 2 H(+)</text>
        <dbReference type="Rhea" id="RHEA:22628"/>
        <dbReference type="ChEBI" id="CHEBI:15378"/>
        <dbReference type="ChEBI" id="CHEBI:29991"/>
        <dbReference type="ChEBI" id="CHEBI:30616"/>
        <dbReference type="ChEBI" id="CHEBI:43474"/>
        <dbReference type="ChEBI" id="CHEBI:58443"/>
        <dbReference type="ChEBI" id="CHEBI:77657"/>
        <dbReference type="ChEBI" id="CHEBI:456216"/>
        <dbReference type="EC" id="6.3.2.6"/>
    </reaction>
</comment>
<comment type="pathway">
    <text evidence="1">Purine metabolism; IMP biosynthesis via de novo pathway; 5-amino-1-(5-phospho-D-ribosyl)imidazole-4-carboxamide from 5-amino-1-(5-phospho-D-ribosyl)imidazole-4-carboxylate: step 1/2.</text>
</comment>
<comment type="similarity">
    <text evidence="1">Belongs to the SAICAR synthetase family.</text>
</comment>
<protein>
    <recommendedName>
        <fullName evidence="1">Phosphoribosylaminoimidazole-succinocarboxamide synthase</fullName>
        <ecNumber evidence="1">6.3.2.6</ecNumber>
    </recommendedName>
    <alternativeName>
        <fullName evidence="1">SAICAR synthetase</fullName>
    </alternativeName>
</protein>
<feature type="chain" id="PRO_1000018733" description="Phosphoribosylaminoimidazole-succinocarboxamide synthase">
    <location>
        <begin position="1"/>
        <end position="243"/>
    </location>
</feature>